<accession>Q7MH01</accession>
<name>MUTL_VIBVY</name>
<gene>
    <name evidence="1" type="primary">mutL</name>
    <name type="ordered locus">VV3073</name>
</gene>
<sequence>MTIRILPARLANQIAAGEVVERPASVVKELVENSLDSGATKIDIDIEKGGAKLIRIRDNGSGIVKDELGLALSRHATSKIHTLDDLEAIMSLGFRGEALASISSVSRLTLTSRPATQEQAWSAYTEGRDMQVKLQPTAHPIGTTVEVVDLFFNTPARRKFLRTEKTEFAHIDELLKRIALSRFDVSITLRHNGKVIRQYRAAHNDLQAEKRLATVCGQAFVRCMLKIELEHQGLKLHGWITTPEGARQQSDLQYCYVNGRMMRDKLINHAIRQSYETSLKPEQFAAYVLFIELDPHQVDVNVHPAKHEVRFHQARLVHDFIYQALASALAQSDSIEQPQINESAFHYQAEPEVAPLGSFPAESNEVPQAVYHAIEKAPAYPRKAGQEQQLQPVAPLESSFSSEQGREVAPAPHNERNAWMESRSPARHTTSSNQSERYGEPAPSKQQVKAYAELLHTPDFPSQNVECHPSPSIASPVQELGKAVSVVAQRYLLTTTKAGCQLISLARAEFYRILGQLNGDKAPLKSQPLLVPLSLKLEKGLVHAAQEHQDRFARMGILFKMRNEKALMVMGVPAPLRQQNLQLLIPDLLSYAASQAQKEEQAKNDTAMAQWLALRVAKVKSHYTLSEAIQIISELEQLWQEKLPLQDAQLVTSVDFSATIAQLT</sequence>
<comment type="function">
    <text evidence="1">This protein is involved in the repair of mismatches in DNA. It is required for dam-dependent methyl-directed DNA mismatch repair. May act as a 'molecular matchmaker', a protein that promotes the formation of a stable complex between two or more DNA-binding proteins in an ATP-dependent manner without itself being part of a final effector complex.</text>
</comment>
<comment type="similarity">
    <text evidence="1">Belongs to the DNA mismatch repair MutL/HexB family.</text>
</comment>
<keyword id="KW-0227">DNA damage</keyword>
<keyword id="KW-0234">DNA repair</keyword>
<reference key="1">
    <citation type="journal article" date="2003" name="Genome Res.">
        <title>Comparative genome analysis of Vibrio vulnificus, a marine pathogen.</title>
        <authorList>
            <person name="Chen C.-Y."/>
            <person name="Wu K.-M."/>
            <person name="Chang Y.-C."/>
            <person name="Chang C.-H."/>
            <person name="Tsai H.-C."/>
            <person name="Liao T.-L."/>
            <person name="Liu Y.-M."/>
            <person name="Chen H.-J."/>
            <person name="Shen A.B.-T."/>
            <person name="Li J.-C."/>
            <person name="Su T.-L."/>
            <person name="Shao C.-P."/>
            <person name="Lee C.-T."/>
            <person name="Hor L.-I."/>
            <person name="Tsai S.-F."/>
        </authorList>
    </citation>
    <scope>NUCLEOTIDE SEQUENCE [LARGE SCALE GENOMIC DNA]</scope>
    <source>
        <strain>YJ016</strain>
    </source>
</reference>
<feature type="chain" id="PRO_0000177993" description="DNA mismatch repair protein MutL">
    <location>
        <begin position="1"/>
        <end position="664"/>
    </location>
</feature>
<feature type="region of interest" description="Disordered" evidence="2">
    <location>
        <begin position="382"/>
        <end position="447"/>
    </location>
</feature>
<feature type="compositionally biased region" description="Polar residues" evidence="2">
    <location>
        <begin position="427"/>
        <end position="436"/>
    </location>
</feature>
<evidence type="ECO:0000255" key="1">
    <source>
        <dbReference type="HAMAP-Rule" id="MF_00149"/>
    </source>
</evidence>
<evidence type="ECO:0000256" key="2">
    <source>
        <dbReference type="SAM" id="MobiDB-lite"/>
    </source>
</evidence>
<proteinExistence type="inferred from homology"/>
<organism>
    <name type="scientific">Vibrio vulnificus (strain YJ016)</name>
    <dbReference type="NCBI Taxonomy" id="196600"/>
    <lineage>
        <taxon>Bacteria</taxon>
        <taxon>Pseudomonadati</taxon>
        <taxon>Pseudomonadota</taxon>
        <taxon>Gammaproteobacteria</taxon>
        <taxon>Vibrionales</taxon>
        <taxon>Vibrionaceae</taxon>
        <taxon>Vibrio</taxon>
    </lineage>
</organism>
<dbReference type="EMBL" id="BA000037">
    <property type="protein sequence ID" value="BAC95837.1"/>
    <property type="molecule type" value="Genomic_DNA"/>
</dbReference>
<dbReference type="RefSeq" id="WP_011151329.1">
    <property type="nucleotide sequence ID" value="NC_005139.1"/>
</dbReference>
<dbReference type="SMR" id="Q7MH01"/>
<dbReference type="STRING" id="672.VV93_v1c28010"/>
<dbReference type="KEGG" id="vvy:VV3073"/>
<dbReference type="PATRIC" id="fig|196600.6.peg.3050"/>
<dbReference type="eggNOG" id="COG0323">
    <property type="taxonomic scope" value="Bacteria"/>
</dbReference>
<dbReference type="HOGENOM" id="CLU_004131_5_1_6"/>
<dbReference type="Proteomes" id="UP000002675">
    <property type="component" value="Chromosome I"/>
</dbReference>
<dbReference type="GO" id="GO:0032300">
    <property type="term" value="C:mismatch repair complex"/>
    <property type="evidence" value="ECO:0007669"/>
    <property type="project" value="InterPro"/>
</dbReference>
<dbReference type="GO" id="GO:0005524">
    <property type="term" value="F:ATP binding"/>
    <property type="evidence" value="ECO:0007669"/>
    <property type="project" value="InterPro"/>
</dbReference>
<dbReference type="GO" id="GO:0016887">
    <property type="term" value="F:ATP hydrolysis activity"/>
    <property type="evidence" value="ECO:0007669"/>
    <property type="project" value="InterPro"/>
</dbReference>
<dbReference type="GO" id="GO:0140664">
    <property type="term" value="F:ATP-dependent DNA damage sensor activity"/>
    <property type="evidence" value="ECO:0007669"/>
    <property type="project" value="InterPro"/>
</dbReference>
<dbReference type="GO" id="GO:0030983">
    <property type="term" value="F:mismatched DNA binding"/>
    <property type="evidence" value="ECO:0007669"/>
    <property type="project" value="InterPro"/>
</dbReference>
<dbReference type="GO" id="GO:0006298">
    <property type="term" value="P:mismatch repair"/>
    <property type="evidence" value="ECO:0007669"/>
    <property type="project" value="UniProtKB-UniRule"/>
</dbReference>
<dbReference type="CDD" id="cd16926">
    <property type="entry name" value="HATPase_MutL-MLH-PMS-like"/>
    <property type="match status" value="1"/>
</dbReference>
<dbReference type="CDD" id="cd03482">
    <property type="entry name" value="MutL_Trans_MutL"/>
    <property type="match status" value="1"/>
</dbReference>
<dbReference type="FunFam" id="3.30.230.10:FF:000013">
    <property type="entry name" value="DNA mismatch repair endonuclease MutL"/>
    <property type="match status" value="1"/>
</dbReference>
<dbReference type="FunFam" id="3.30.565.10:FF:000003">
    <property type="entry name" value="DNA mismatch repair endonuclease MutL"/>
    <property type="match status" value="1"/>
</dbReference>
<dbReference type="Gene3D" id="3.30.230.10">
    <property type="match status" value="1"/>
</dbReference>
<dbReference type="Gene3D" id="3.30.565.10">
    <property type="entry name" value="Histidine kinase-like ATPase, C-terminal domain"/>
    <property type="match status" value="1"/>
</dbReference>
<dbReference type="Gene3D" id="3.30.1540.20">
    <property type="entry name" value="MutL, C-terminal domain, dimerisation subdomain"/>
    <property type="match status" value="1"/>
</dbReference>
<dbReference type="Gene3D" id="3.30.1370.100">
    <property type="entry name" value="MutL, C-terminal domain, regulatory subdomain"/>
    <property type="match status" value="1"/>
</dbReference>
<dbReference type="HAMAP" id="MF_00149">
    <property type="entry name" value="DNA_mis_repair"/>
    <property type="match status" value="1"/>
</dbReference>
<dbReference type="InterPro" id="IPR014762">
    <property type="entry name" value="DNA_mismatch_repair_CS"/>
</dbReference>
<dbReference type="InterPro" id="IPR020667">
    <property type="entry name" value="DNA_mismatch_repair_MutL"/>
</dbReference>
<dbReference type="InterPro" id="IPR013507">
    <property type="entry name" value="DNA_mismatch_S5_2-like"/>
</dbReference>
<dbReference type="InterPro" id="IPR036890">
    <property type="entry name" value="HATPase_C_sf"/>
</dbReference>
<dbReference type="InterPro" id="IPR002099">
    <property type="entry name" value="MutL/Mlh/PMS"/>
</dbReference>
<dbReference type="InterPro" id="IPR038973">
    <property type="entry name" value="MutL/Mlh/Pms-like"/>
</dbReference>
<dbReference type="InterPro" id="IPR014790">
    <property type="entry name" value="MutL_C"/>
</dbReference>
<dbReference type="InterPro" id="IPR042120">
    <property type="entry name" value="MutL_C_dimsub"/>
</dbReference>
<dbReference type="InterPro" id="IPR042121">
    <property type="entry name" value="MutL_C_regsub"/>
</dbReference>
<dbReference type="InterPro" id="IPR037198">
    <property type="entry name" value="MutL_C_sf"/>
</dbReference>
<dbReference type="InterPro" id="IPR020568">
    <property type="entry name" value="Ribosomal_Su5_D2-typ_SF"/>
</dbReference>
<dbReference type="InterPro" id="IPR014721">
    <property type="entry name" value="Ribsml_uS5_D2-typ_fold_subgr"/>
</dbReference>
<dbReference type="NCBIfam" id="TIGR00585">
    <property type="entry name" value="mutl"/>
    <property type="match status" value="1"/>
</dbReference>
<dbReference type="NCBIfam" id="NF000948">
    <property type="entry name" value="PRK00095.1-1"/>
    <property type="match status" value="1"/>
</dbReference>
<dbReference type="PANTHER" id="PTHR10073">
    <property type="entry name" value="DNA MISMATCH REPAIR PROTEIN MLH, PMS, MUTL"/>
    <property type="match status" value="1"/>
</dbReference>
<dbReference type="PANTHER" id="PTHR10073:SF12">
    <property type="entry name" value="DNA MISMATCH REPAIR PROTEIN MLH1"/>
    <property type="match status" value="1"/>
</dbReference>
<dbReference type="Pfam" id="PF01119">
    <property type="entry name" value="DNA_mis_repair"/>
    <property type="match status" value="1"/>
</dbReference>
<dbReference type="Pfam" id="PF13589">
    <property type="entry name" value="HATPase_c_3"/>
    <property type="match status" value="1"/>
</dbReference>
<dbReference type="Pfam" id="PF08676">
    <property type="entry name" value="MutL_C"/>
    <property type="match status" value="1"/>
</dbReference>
<dbReference type="SMART" id="SM01340">
    <property type="entry name" value="DNA_mis_repair"/>
    <property type="match status" value="1"/>
</dbReference>
<dbReference type="SMART" id="SM00853">
    <property type="entry name" value="MutL_C"/>
    <property type="match status" value="1"/>
</dbReference>
<dbReference type="SUPFAM" id="SSF55874">
    <property type="entry name" value="ATPase domain of HSP90 chaperone/DNA topoisomerase II/histidine kinase"/>
    <property type="match status" value="1"/>
</dbReference>
<dbReference type="SUPFAM" id="SSF118116">
    <property type="entry name" value="DNA mismatch repair protein MutL"/>
    <property type="match status" value="1"/>
</dbReference>
<dbReference type="SUPFAM" id="SSF54211">
    <property type="entry name" value="Ribosomal protein S5 domain 2-like"/>
    <property type="match status" value="1"/>
</dbReference>
<dbReference type="PROSITE" id="PS00058">
    <property type="entry name" value="DNA_MISMATCH_REPAIR_1"/>
    <property type="match status" value="1"/>
</dbReference>
<protein>
    <recommendedName>
        <fullName evidence="1">DNA mismatch repair protein MutL</fullName>
    </recommendedName>
</protein>